<comment type="function">
    <text evidence="1">May play a role in stationary phase survival.</text>
</comment>
<comment type="catalytic activity">
    <reaction>
        <text>alpha-D-glucose 1-phosphate + UTP + H(+) = UDP-alpha-D-glucose + diphosphate</text>
        <dbReference type="Rhea" id="RHEA:19889"/>
        <dbReference type="ChEBI" id="CHEBI:15378"/>
        <dbReference type="ChEBI" id="CHEBI:33019"/>
        <dbReference type="ChEBI" id="CHEBI:46398"/>
        <dbReference type="ChEBI" id="CHEBI:58601"/>
        <dbReference type="ChEBI" id="CHEBI:58885"/>
        <dbReference type="EC" id="2.7.7.9"/>
    </reaction>
</comment>
<comment type="similarity">
    <text evidence="2">Belongs to the UDPGP type 2 family.</text>
</comment>
<proteinExistence type="inferred from homology"/>
<evidence type="ECO:0000250" key="1"/>
<evidence type="ECO:0000305" key="2"/>
<reference key="1">
    <citation type="journal article" date="1995" name="Science">
        <title>The minimal gene complement of Mycoplasma genitalium.</title>
        <authorList>
            <person name="Fraser C.M."/>
            <person name="Gocayne J.D."/>
            <person name="White O."/>
            <person name="Adams M.D."/>
            <person name="Clayton R.A."/>
            <person name="Fleischmann R.D."/>
            <person name="Bult C.J."/>
            <person name="Kerlavage A.R."/>
            <person name="Sutton G.G."/>
            <person name="Kelley J.M."/>
            <person name="Fritchman J.L."/>
            <person name="Weidman J.F."/>
            <person name="Small K.V."/>
            <person name="Sandusky M."/>
            <person name="Fuhrmann J.L."/>
            <person name="Nguyen D.T."/>
            <person name="Utterback T.R."/>
            <person name="Saudek D.M."/>
            <person name="Phillips C.A."/>
            <person name="Merrick J.M."/>
            <person name="Tomb J.-F."/>
            <person name="Dougherty B.A."/>
            <person name="Bott K.F."/>
            <person name="Hu P.-C."/>
            <person name="Lucier T.S."/>
            <person name="Peterson S.N."/>
            <person name="Smith H.O."/>
            <person name="Hutchison C.A. III"/>
            <person name="Venter J.C."/>
        </authorList>
    </citation>
    <scope>NUCLEOTIDE SEQUENCE [LARGE SCALE GENOMIC DNA]</scope>
    <source>
        <strain>ATCC 33530 / DSM 19775 / NCTC 10195 / G37</strain>
    </source>
</reference>
<reference key="2">
    <citation type="journal article" date="1993" name="J. Bacteriol.">
        <title>A survey of the Mycoplasma genitalium genome by using random sequencing.</title>
        <authorList>
            <person name="Peterson S.N."/>
            <person name="Hu P.-C."/>
            <person name="Bott K.F."/>
            <person name="Hutchison C.A. III"/>
        </authorList>
    </citation>
    <scope>NUCLEOTIDE SEQUENCE [GENOMIC DNA] OF 61-163</scope>
    <source>
        <strain>ATCC 33530 / DSM 19775 / NCTC 10195 / G37</strain>
    </source>
</reference>
<dbReference type="EC" id="2.7.7.9"/>
<dbReference type="EMBL" id="L43967">
    <property type="protein sequence ID" value="AAC72473.1"/>
    <property type="molecule type" value="Genomic_DNA"/>
</dbReference>
<dbReference type="EMBL" id="U02258">
    <property type="protein sequence ID" value="AAD12523.1"/>
    <property type="molecule type" value="Genomic_DNA"/>
</dbReference>
<dbReference type="PIR" id="A64250">
    <property type="entry name" value="A64250"/>
</dbReference>
<dbReference type="RefSeq" id="WP_009885581.1">
    <property type="nucleotide sequence ID" value="NC_000908.2"/>
</dbReference>
<dbReference type="SMR" id="P47691"/>
<dbReference type="FunCoup" id="P47691">
    <property type="interactions" value="78"/>
</dbReference>
<dbReference type="STRING" id="243273.MG_453"/>
<dbReference type="GeneID" id="88282633"/>
<dbReference type="KEGG" id="mge:MG_453"/>
<dbReference type="eggNOG" id="COG1210">
    <property type="taxonomic scope" value="Bacteria"/>
</dbReference>
<dbReference type="HOGENOM" id="CLU_029499_1_0_14"/>
<dbReference type="InParanoid" id="P47691"/>
<dbReference type="OrthoDB" id="9803871at2"/>
<dbReference type="BioCyc" id="MGEN243273:G1GJ2-546-MONOMER"/>
<dbReference type="Proteomes" id="UP000000807">
    <property type="component" value="Chromosome"/>
</dbReference>
<dbReference type="GO" id="GO:0003983">
    <property type="term" value="F:UTP:glucose-1-phosphate uridylyltransferase activity"/>
    <property type="evidence" value="ECO:0007669"/>
    <property type="project" value="UniProtKB-EC"/>
</dbReference>
<dbReference type="GO" id="GO:0009058">
    <property type="term" value="P:biosynthetic process"/>
    <property type="evidence" value="ECO:0007669"/>
    <property type="project" value="InterPro"/>
</dbReference>
<dbReference type="GO" id="GO:0006011">
    <property type="term" value="P:UDP-alpha-D-glucose metabolic process"/>
    <property type="evidence" value="ECO:0007669"/>
    <property type="project" value="InterPro"/>
</dbReference>
<dbReference type="CDD" id="cd02541">
    <property type="entry name" value="UGPase_prokaryotic"/>
    <property type="match status" value="1"/>
</dbReference>
<dbReference type="Gene3D" id="3.90.550.10">
    <property type="entry name" value="Spore Coat Polysaccharide Biosynthesis Protein SpsA, Chain A"/>
    <property type="match status" value="1"/>
</dbReference>
<dbReference type="InterPro" id="IPR005771">
    <property type="entry name" value="GalU_uridylyltTrfase_bac/arc"/>
</dbReference>
<dbReference type="InterPro" id="IPR005835">
    <property type="entry name" value="NTP_transferase_dom"/>
</dbReference>
<dbReference type="InterPro" id="IPR029044">
    <property type="entry name" value="Nucleotide-diphossugar_trans"/>
</dbReference>
<dbReference type="NCBIfam" id="TIGR01099">
    <property type="entry name" value="galU"/>
    <property type="match status" value="1"/>
</dbReference>
<dbReference type="PANTHER" id="PTHR43197">
    <property type="entry name" value="UTP--GLUCOSE-1-PHOSPHATE URIDYLYLTRANSFERASE"/>
    <property type="match status" value="1"/>
</dbReference>
<dbReference type="PANTHER" id="PTHR43197:SF1">
    <property type="entry name" value="UTP--GLUCOSE-1-PHOSPHATE URIDYLYLTRANSFERASE"/>
    <property type="match status" value="1"/>
</dbReference>
<dbReference type="Pfam" id="PF00483">
    <property type="entry name" value="NTP_transferase"/>
    <property type="match status" value="1"/>
</dbReference>
<dbReference type="SUPFAM" id="SSF53448">
    <property type="entry name" value="Nucleotide-diphospho-sugar transferases"/>
    <property type="match status" value="1"/>
</dbReference>
<sequence>MKTKIRKAVIPAAGLGVRLLPATKAIPKEMLPLVNKPTIQYIVEEAVKSGIEQILVIVSSKKTAILDHFDYDLILENALIQKNKLQEHKEIEDIANLAHIFFVRQKNQDGLGDAILFAESFVGNEDFAVLLGDDVVFSKEPALKQCLEAYYETNCQTIGVQEVDPCHVDKYGIITPEGDYKNKDLIKVLAMTEKPKPKDAKSNLAILGRYVLKPSIFKALRSVPYGVGGELQLTDGLNFCLKNENFYARKFTGTRFDVGTKSGFIKANLFTALNNKDISKKEVLELLNLVKA</sequence>
<accession>P47691</accession>
<protein>
    <recommendedName>
        <fullName>UTP--glucose-1-phosphate uridylyltransferase</fullName>
        <ecNumber>2.7.7.9</ecNumber>
    </recommendedName>
    <alternativeName>
        <fullName>Alpha-D-glucosyl-1-phosphate uridylyltransferase</fullName>
    </alternativeName>
    <alternativeName>
        <fullName>UDP-glucose pyrophosphorylase</fullName>
        <shortName>UDPGP</shortName>
    </alternativeName>
    <alternativeName>
        <fullName>Uridine diphosphoglucose pyrophosphorylase</fullName>
    </alternativeName>
</protein>
<keyword id="KW-0548">Nucleotidyltransferase</keyword>
<keyword id="KW-1185">Reference proteome</keyword>
<keyword id="KW-0808">Transferase</keyword>
<name>GALU_MYCGE</name>
<organism>
    <name type="scientific">Mycoplasma genitalium (strain ATCC 33530 / DSM 19775 / NCTC 10195 / G37)</name>
    <name type="common">Mycoplasmoides genitalium</name>
    <dbReference type="NCBI Taxonomy" id="243273"/>
    <lineage>
        <taxon>Bacteria</taxon>
        <taxon>Bacillati</taxon>
        <taxon>Mycoplasmatota</taxon>
        <taxon>Mycoplasmoidales</taxon>
        <taxon>Mycoplasmoidaceae</taxon>
        <taxon>Mycoplasmoides</taxon>
    </lineage>
</organism>
<feature type="chain" id="PRO_0000201359" description="UTP--glucose-1-phosphate uridylyltransferase">
    <location>
        <begin position="1"/>
        <end position="292"/>
    </location>
</feature>
<gene>
    <name type="primary">galU</name>
    <name type="synonym">gtaB</name>
    <name type="ordered locus">MG453</name>
</gene>